<sequence length="874" mass="95034">MKSNQIRQAFLDYFASKGHQIVSSSSLVPAGDPTLLFTNAGMNQFKDVFLGFDKRPYTRATSSQKCVRAGGKHNDLENVGYTARHHTFFEMLGNFSFGDYFKRDAIHYAWELLTQVFKLPADKLTVTVYAEDDEAYDIWTREIGVPAERVIRIGDNKGARYASDNFWMMGDTGPCGPCTEIFYDHGEHIPGGPPGSPDEDGDRFIEIWNNVFMQFNRDEQGVMHPLPKPSVDTGMGLERIAAVLQGVHSNYEIDLFQNLIKAAARVTNTTDLDSPSLKVLADHIRACSFLIADGVIPGNEGRGYVLRRIIRRAIRHGYKLGARQAFFHLMVSALVNEMGDAYPELKSGEERITSILRQEEDRFFETIEHGMAILEAELEEMAKTGNHVFNGETAFKLHDTFGFPLDLTADVCRERGVSVDSAAFDAAMARQKEQARAAGKFKMAANLEYTGNATTFHGYDTLEAQGKVLALYKDGSAVPALNEGELGVVVLDNTPFYAESGGQVGDQGILKGAEGIFQVEDTQKIQASVFGHHGVLSTGTLRVGDEVSARVDLLSRHRTMRHHSATHLMHKALRAVLGSHVQQKGSLVDPDKTRFDFSHNAPVTADEIRRIEDIVNAEILANTPTLARVMPIDEAQKTGAMMLFGEKYGDEVRVLDIGTSRELCGGTHVSRTGDIGLFKIVSESGVAAGVRRIEAAAGDVALRHIQQQQQLLADAAASFKVPAIELAGKISQTLEQIKALEKELARLKSKLASSQGDELASQAVNIGGIKVLAATLEGADANTLRETMDKLKDKLKTAAIVLASVNGDKVSVAAGVTTDTTARIKAGELVNFVAAQVGGKGGGKPDMAMAGGSDPSQLPRALASVAGWVEERLK</sequence>
<proteinExistence type="inferred from homology"/>
<evidence type="ECO:0000255" key="1">
    <source>
        <dbReference type="HAMAP-Rule" id="MF_00036"/>
    </source>
</evidence>
<comment type="function">
    <text evidence="1">Catalyzes the attachment of alanine to tRNA(Ala) in a two-step reaction: alanine is first activated by ATP to form Ala-AMP and then transferred to the acceptor end of tRNA(Ala). Also edits incorrectly charged Ser-tRNA(Ala) and Gly-tRNA(Ala) via its editing domain.</text>
</comment>
<comment type="catalytic activity">
    <reaction evidence="1">
        <text>tRNA(Ala) + L-alanine + ATP = L-alanyl-tRNA(Ala) + AMP + diphosphate</text>
        <dbReference type="Rhea" id="RHEA:12540"/>
        <dbReference type="Rhea" id="RHEA-COMP:9657"/>
        <dbReference type="Rhea" id="RHEA-COMP:9923"/>
        <dbReference type="ChEBI" id="CHEBI:30616"/>
        <dbReference type="ChEBI" id="CHEBI:33019"/>
        <dbReference type="ChEBI" id="CHEBI:57972"/>
        <dbReference type="ChEBI" id="CHEBI:78442"/>
        <dbReference type="ChEBI" id="CHEBI:78497"/>
        <dbReference type="ChEBI" id="CHEBI:456215"/>
        <dbReference type="EC" id="6.1.1.7"/>
    </reaction>
</comment>
<comment type="cofactor">
    <cofactor evidence="1">
        <name>Zn(2+)</name>
        <dbReference type="ChEBI" id="CHEBI:29105"/>
    </cofactor>
    <text evidence="1">Binds 1 zinc ion per subunit.</text>
</comment>
<comment type="subcellular location">
    <subcellularLocation>
        <location evidence="1">Cytoplasm</location>
    </subcellularLocation>
</comment>
<comment type="domain">
    <text evidence="1">Consists of three domains; the N-terminal catalytic domain, the editing domain and the C-terminal C-Ala domain. The editing domain removes incorrectly charged amino acids, while the C-Ala domain, along with tRNA(Ala), serves as a bridge to cooperatively bring together the editing and aminoacylation centers thus stimulating deacylation of misacylated tRNAs.</text>
</comment>
<comment type="similarity">
    <text evidence="1">Belongs to the class-II aminoacyl-tRNA synthetase family.</text>
</comment>
<keyword id="KW-0030">Aminoacyl-tRNA synthetase</keyword>
<keyword id="KW-0067">ATP-binding</keyword>
<keyword id="KW-0963">Cytoplasm</keyword>
<keyword id="KW-0436">Ligase</keyword>
<keyword id="KW-0479">Metal-binding</keyword>
<keyword id="KW-0547">Nucleotide-binding</keyword>
<keyword id="KW-0648">Protein biosynthesis</keyword>
<keyword id="KW-1185">Reference proteome</keyword>
<keyword id="KW-0694">RNA-binding</keyword>
<keyword id="KW-0820">tRNA-binding</keyword>
<keyword id="KW-0862">Zinc</keyword>
<feature type="chain" id="PRO_0000347671" description="Alanine--tRNA ligase">
    <location>
        <begin position="1"/>
        <end position="874"/>
    </location>
</feature>
<feature type="binding site" evidence="1">
    <location>
        <position position="563"/>
    </location>
    <ligand>
        <name>Zn(2+)</name>
        <dbReference type="ChEBI" id="CHEBI:29105"/>
    </ligand>
</feature>
<feature type="binding site" evidence="1">
    <location>
        <position position="567"/>
    </location>
    <ligand>
        <name>Zn(2+)</name>
        <dbReference type="ChEBI" id="CHEBI:29105"/>
    </ligand>
</feature>
<feature type="binding site" evidence="1">
    <location>
        <position position="664"/>
    </location>
    <ligand>
        <name>Zn(2+)</name>
        <dbReference type="ChEBI" id="CHEBI:29105"/>
    </ligand>
</feature>
<feature type="binding site" evidence="1">
    <location>
        <position position="668"/>
    </location>
    <ligand>
        <name>Zn(2+)</name>
        <dbReference type="ChEBI" id="CHEBI:29105"/>
    </ligand>
</feature>
<reference key="1">
    <citation type="submission" date="2006-03" db="EMBL/GenBank/DDBJ databases">
        <title>Complete sequence of Methylobacillus flagellatus KT.</title>
        <authorList>
            <consortium name="US DOE Joint Genome Institute"/>
            <person name="Copeland A."/>
            <person name="Lucas S."/>
            <person name="Lapidus A."/>
            <person name="Barry K."/>
            <person name="Detter J.C."/>
            <person name="Glavina del Rio T."/>
            <person name="Hammon N."/>
            <person name="Israni S."/>
            <person name="Dalin E."/>
            <person name="Tice H."/>
            <person name="Pitluck S."/>
            <person name="Brettin T."/>
            <person name="Bruce D."/>
            <person name="Han C."/>
            <person name="Tapia R."/>
            <person name="Saunders E."/>
            <person name="Gilna P."/>
            <person name="Schmutz J."/>
            <person name="Larimer F."/>
            <person name="Land M."/>
            <person name="Kyrpides N."/>
            <person name="Anderson I."/>
            <person name="Richardson P."/>
        </authorList>
    </citation>
    <scope>NUCLEOTIDE SEQUENCE [LARGE SCALE GENOMIC DNA]</scope>
    <source>
        <strain>ATCC 51484 / DSM 6875 / VKM B-1610 / KT</strain>
    </source>
</reference>
<gene>
    <name evidence="1" type="primary">alaS</name>
    <name type="ordered locus">Mfla_0568</name>
</gene>
<organism>
    <name type="scientific">Methylobacillus flagellatus (strain ATCC 51484 / DSM 6875 / VKM B-1610 / KT)</name>
    <dbReference type="NCBI Taxonomy" id="265072"/>
    <lineage>
        <taxon>Bacteria</taxon>
        <taxon>Pseudomonadati</taxon>
        <taxon>Pseudomonadota</taxon>
        <taxon>Betaproteobacteria</taxon>
        <taxon>Nitrosomonadales</taxon>
        <taxon>Methylophilaceae</taxon>
        <taxon>Methylobacillus</taxon>
    </lineage>
</organism>
<name>SYA_METFK</name>
<accession>Q1H3U9</accession>
<protein>
    <recommendedName>
        <fullName evidence="1">Alanine--tRNA ligase</fullName>
        <ecNumber evidence="1">6.1.1.7</ecNumber>
    </recommendedName>
    <alternativeName>
        <fullName evidence="1">Alanyl-tRNA synthetase</fullName>
        <shortName evidence="1">AlaRS</shortName>
    </alternativeName>
</protein>
<dbReference type="EC" id="6.1.1.7" evidence="1"/>
<dbReference type="EMBL" id="CP000284">
    <property type="protein sequence ID" value="ABE48838.1"/>
    <property type="molecule type" value="Genomic_DNA"/>
</dbReference>
<dbReference type="RefSeq" id="WP_011478935.1">
    <property type="nucleotide sequence ID" value="NC_007947.1"/>
</dbReference>
<dbReference type="SMR" id="Q1H3U9"/>
<dbReference type="STRING" id="265072.Mfla_0568"/>
<dbReference type="KEGG" id="mfa:Mfla_0568"/>
<dbReference type="eggNOG" id="COG0013">
    <property type="taxonomic scope" value="Bacteria"/>
</dbReference>
<dbReference type="HOGENOM" id="CLU_004485_1_1_4"/>
<dbReference type="OrthoDB" id="9803884at2"/>
<dbReference type="Proteomes" id="UP000002440">
    <property type="component" value="Chromosome"/>
</dbReference>
<dbReference type="GO" id="GO:0005829">
    <property type="term" value="C:cytosol"/>
    <property type="evidence" value="ECO:0007669"/>
    <property type="project" value="TreeGrafter"/>
</dbReference>
<dbReference type="GO" id="GO:0004813">
    <property type="term" value="F:alanine-tRNA ligase activity"/>
    <property type="evidence" value="ECO:0007669"/>
    <property type="project" value="UniProtKB-UniRule"/>
</dbReference>
<dbReference type="GO" id="GO:0002161">
    <property type="term" value="F:aminoacyl-tRNA deacylase activity"/>
    <property type="evidence" value="ECO:0007669"/>
    <property type="project" value="TreeGrafter"/>
</dbReference>
<dbReference type="GO" id="GO:0005524">
    <property type="term" value="F:ATP binding"/>
    <property type="evidence" value="ECO:0007669"/>
    <property type="project" value="UniProtKB-UniRule"/>
</dbReference>
<dbReference type="GO" id="GO:0000049">
    <property type="term" value="F:tRNA binding"/>
    <property type="evidence" value="ECO:0007669"/>
    <property type="project" value="UniProtKB-KW"/>
</dbReference>
<dbReference type="GO" id="GO:0008270">
    <property type="term" value="F:zinc ion binding"/>
    <property type="evidence" value="ECO:0007669"/>
    <property type="project" value="UniProtKB-UniRule"/>
</dbReference>
<dbReference type="GO" id="GO:0006419">
    <property type="term" value="P:alanyl-tRNA aminoacylation"/>
    <property type="evidence" value="ECO:0007669"/>
    <property type="project" value="UniProtKB-UniRule"/>
</dbReference>
<dbReference type="GO" id="GO:0045892">
    <property type="term" value="P:negative regulation of DNA-templated transcription"/>
    <property type="evidence" value="ECO:0007669"/>
    <property type="project" value="TreeGrafter"/>
</dbReference>
<dbReference type="CDD" id="cd00673">
    <property type="entry name" value="AlaRS_core"/>
    <property type="match status" value="1"/>
</dbReference>
<dbReference type="FunFam" id="2.40.30.130:FF:000001">
    <property type="entry name" value="Alanine--tRNA ligase"/>
    <property type="match status" value="1"/>
</dbReference>
<dbReference type="FunFam" id="3.10.310.40:FF:000001">
    <property type="entry name" value="Alanine--tRNA ligase"/>
    <property type="match status" value="1"/>
</dbReference>
<dbReference type="FunFam" id="3.30.54.20:FF:000001">
    <property type="entry name" value="Alanine--tRNA ligase"/>
    <property type="match status" value="1"/>
</dbReference>
<dbReference type="FunFam" id="3.30.930.10:FF:000004">
    <property type="entry name" value="Alanine--tRNA ligase"/>
    <property type="match status" value="1"/>
</dbReference>
<dbReference type="FunFam" id="3.30.980.10:FF:000004">
    <property type="entry name" value="Alanine--tRNA ligase, cytoplasmic"/>
    <property type="match status" value="1"/>
</dbReference>
<dbReference type="Gene3D" id="2.40.30.130">
    <property type="match status" value="1"/>
</dbReference>
<dbReference type="Gene3D" id="3.10.310.40">
    <property type="match status" value="1"/>
</dbReference>
<dbReference type="Gene3D" id="3.30.54.20">
    <property type="match status" value="1"/>
</dbReference>
<dbReference type="Gene3D" id="6.10.250.550">
    <property type="match status" value="1"/>
</dbReference>
<dbReference type="Gene3D" id="3.30.930.10">
    <property type="entry name" value="Bira Bifunctional Protein, Domain 2"/>
    <property type="match status" value="1"/>
</dbReference>
<dbReference type="Gene3D" id="3.30.980.10">
    <property type="entry name" value="Threonyl-trna Synthetase, Chain A, domain 2"/>
    <property type="match status" value="1"/>
</dbReference>
<dbReference type="HAMAP" id="MF_00036_B">
    <property type="entry name" value="Ala_tRNA_synth_B"/>
    <property type="match status" value="1"/>
</dbReference>
<dbReference type="InterPro" id="IPR045864">
    <property type="entry name" value="aa-tRNA-synth_II/BPL/LPL"/>
</dbReference>
<dbReference type="InterPro" id="IPR002318">
    <property type="entry name" value="Ala-tRNA-lgiase_IIc"/>
</dbReference>
<dbReference type="InterPro" id="IPR018162">
    <property type="entry name" value="Ala-tRNA-ligase_IIc_anticod-bd"/>
</dbReference>
<dbReference type="InterPro" id="IPR018165">
    <property type="entry name" value="Ala-tRNA-synth_IIc_core"/>
</dbReference>
<dbReference type="InterPro" id="IPR018164">
    <property type="entry name" value="Ala-tRNA-synth_IIc_N"/>
</dbReference>
<dbReference type="InterPro" id="IPR050058">
    <property type="entry name" value="Ala-tRNA_ligase"/>
</dbReference>
<dbReference type="InterPro" id="IPR023033">
    <property type="entry name" value="Ala_tRNA_ligase_euk/bac"/>
</dbReference>
<dbReference type="InterPro" id="IPR003156">
    <property type="entry name" value="DHHA1_dom"/>
</dbReference>
<dbReference type="InterPro" id="IPR018163">
    <property type="entry name" value="Thr/Ala-tRNA-synth_IIc_edit"/>
</dbReference>
<dbReference type="InterPro" id="IPR009000">
    <property type="entry name" value="Transl_B-barrel_sf"/>
</dbReference>
<dbReference type="InterPro" id="IPR012947">
    <property type="entry name" value="tRNA_SAD"/>
</dbReference>
<dbReference type="NCBIfam" id="TIGR00344">
    <property type="entry name" value="alaS"/>
    <property type="match status" value="1"/>
</dbReference>
<dbReference type="PANTHER" id="PTHR11777:SF9">
    <property type="entry name" value="ALANINE--TRNA LIGASE, CYTOPLASMIC"/>
    <property type="match status" value="1"/>
</dbReference>
<dbReference type="PANTHER" id="PTHR11777">
    <property type="entry name" value="ALANYL-TRNA SYNTHETASE"/>
    <property type="match status" value="1"/>
</dbReference>
<dbReference type="Pfam" id="PF02272">
    <property type="entry name" value="DHHA1"/>
    <property type="match status" value="1"/>
</dbReference>
<dbReference type="Pfam" id="PF01411">
    <property type="entry name" value="tRNA-synt_2c"/>
    <property type="match status" value="1"/>
</dbReference>
<dbReference type="Pfam" id="PF07973">
    <property type="entry name" value="tRNA_SAD"/>
    <property type="match status" value="1"/>
</dbReference>
<dbReference type="PRINTS" id="PR00980">
    <property type="entry name" value="TRNASYNTHALA"/>
</dbReference>
<dbReference type="SMART" id="SM00863">
    <property type="entry name" value="tRNA_SAD"/>
    <property type="match status" value="1"/>
</dbReference>
<dbReference type="SUPFAM" id="SSF55681">
    <property type="entry name" value="Class II aaRS and biotin synthetases"/>
    <property type="match status" value="1"/>
</dbReference>
<dbReference type="SUPFAM" id="SSF101353">
    <property type="entry name" value="Putative anticodon-binding domain of alanyl-tRNA synthetase (AlaRS)"/>
    <property type="match status" value="1"/>
</dbReference>
<dbReference type="SUPFAM" id="SSF55186">
    <property type="entry name" value="ThrRS/AlaRS common domain"/>
    <property type="match status" value="1"/>
</dbReference>
<dbReference type="SUPFAM" id="SSF50447">
    <property type="entry name" value="Translation proteins"/>
    <property type="match status" value="1"/>
</dbReference>
<dbReference type="PROSITE" id="PS50860">
    <property type="entry name" value="AA_TRNA_LIGASE_II_ALA"/>
    <property type="match status" value="1"/>
</dbReference>